<geneLocation type="chloroplast"/>
<sequence>MIREKFERIKPHLNIGTIGHVDHGKTTLTAAITMALAVKGYTKAKNYMDIDSAPEEKARGITINTAHVEYETDVRHYAHVDCPGHADYVKNMITGAAQMDGAILVVSGADGPMPQTKEHILLAKQVGVPAIVVFLNKADQVDDDELLELVELEIQETLTTYEYPGEEIPIITGSAITALESLTAKYVLRIGNKWVQKIYDLMETVDEYIPTPKRDTEKPFLMAIENVVSITGRGTVATGRVERGMIEVGQTVELVGLKNTKEAIITGLEMFHKTLEKSVAGDNVGILLRRIQKEEIQRGMVLAKPSSILPHQHFKAQVYILKKEEGGRHTSFFAGYRPQFYVRTTDVTGHIKTFQGKIDNTQIQMVMPGDRIQMEVELIRPIAIETRMRFAIREGGKTVGAGVVTTIVQA</sequence>
<protein>
    <recommendedName>
        <fullName>Elongation factor Tu, chloroplastic</fullName>
        <shortName>EF-Tu</shortName>
        <ecNumber evidence="2">3.6.5.3</ecNumber>
    </recommendedName>
</protein>
<comment type="function">
    <text evidence="2">GTP hydrolase that promotes the GTP-dependent binding of aminoacyl-tRNA to the A-site of ribosomes during protein biosynthesis.</text>
</comment>
<comment type="catalytic activity">
    <reaction evidence="2">
        <text>GTP + H2O = GDP + phosphate + H(+)</text>
        <dbReference type="Rhea" id="RHEA:19669"/>
        <dbReference type="ChEBI" id="CHEBI:15377"/>
        <dbReference type="ChEBI" id="CHEBI:15378"/>
        <dbReference type="ChEBI" id="CHEBI:37565"/>
        <dbReference type="ChEBI" id="CHEBI:43474"/>
        <dbReference type="ChEBI" id="CHEBI:58189"/>
        <dbReference type="EC" id="3.6.5.3"/>
    </reaction>
    <physiologicalReaction direction="left-to-right" evidence="2">
        <dbReference type="Rhea" id="RHEA:19670"/>
    </physiologicalReaction>
</comment>
<comment type="subcellular location">
    <subcellularLocation>
        <location>Plastid</location>
        <location>Chloroplast</location>
    </subcellularLocation>
</comment>
<comment type="similarity">
    <text evidence="3">Belongs to the TRAFAC class translation factor GTPase superfamily. Classic translation factor GTPase family. EF-Tu/EF-1A subfamily.</text>
</comment>
<name>EFTU_CODFR</name>
<reference key="1">
    <citation type="journal article" date="1995" name="Mol. Phylogenet. Evol.">
        <title>Phylogenetic analysis of tufA sequences indicates a cyanobacterial origin of all plastids.</title>
        <authorList>
            <person name="Delwiche C.F."/>
            <person name="Kuhsel M."/>
            <person name="Palmer J.D."/>
        </authorList>
    </citation>
    <scope>NUCLEOTIDE SEQUENCE [GENOMIC DNA]</scope>
</reference>
<accession>P50372</accession>
<gene>
    <name type="primary">tufA</name>
</gene>
<feature type="chain" id="PRO_0000091450" description="Elongation factor Tu, chloroplastic">
    <location>
        <begin position="1"/>
        <end position="410"/>
    </location>
</feature>
<feature type="domain" description="tr-type G">
    <location>
        <begin position="10"/>
        <end position="213"/>
    </location>
</feature>
<feature type="region of interest" description="G1" evidence="1">
    <location>
        <begin position="19"/>
        <end position="26"/>
    </location>
</feature>
<feature type="region of interest" description="G2" evidence="1">
    <location>
        <begin position="60"/>
        <end position="64"/>
    </location>
</feature>
<feature type="region of interest" description="G3" evidence="1">
    <location>
        <begin position="81"/>
        <end position="84"/>
    </location>
</feature>
<feature type="region of interest" description="G4" evidence="1">
    <location>
        <begin position="136"/>
        <end position="139"/>
    </location>
</feature>
<feature type="region of interest" description="G5" evidence="1">
    <location>
        <begin position="174"/>
        <end position="176"/>
    </location>
</feature>
<feature type="binding site" evidence="1">
    <location>
        <begin position="19"/>
        <end position="26"/>
    </location>
    <ligand>
        <name>GTP</name>
        <dbReference type="ChEBI" id="CHEBI:37565"/>
    </ligand>
</feature>
<feature type="binding site" evidence="2">
    <location>
        <position position="26"/>
    </location>
    <ligand>
        <name>Mg(2+)</name>
        <dbReference type="ChEBI" id="CHEBI:18420"/>
    </ligand>
</feature>
<feature type="binding site" evidence="1">
    <location>
        <begin position="81"/>
        <end position="85"/>
    </location>
    <ligand>
        <name>GTP</name>
        <dbReference type="ChEBI" id="CHEBI:37565"/>
    </ligand>
</feature>
<feature type="binding site" evidence="1">
    <location>
        <begin position="136"/>
        <end position="139"/>
    </location>
    <ligand>
        <name>GTP</name>
        <dbReference type="ChEBI" id="CHEBI:37565"/>
    </ligand>
</feature>
<dbReference type="EC" id="3.6.5.3" evidence="2"/>
<dbReference type="EMBL" id="U09427">
    <property type="protein sequence ID" value="AAA87687.1"/>
    <property type="molecule type" value="Genomic_DNA"/>
</dbReference>
<dbReference type="SMR" id="P50372"/>
<dbReference type="GO" id="GO:0009507">
    <property type="term" value="C:chloroplast"/>
    <property type="evidence" value="ECO:0007669"/>
    <property type="project" value="UniProtKB-SubCell"/>
</dbReference>
<dbReference type="GO" id="GO:0005739">
    <property type="term" value="C:mitochondrion"/>
    <property type="evidence" value="ECO:0007669"/>
    <property type="project" value="TreeGrafter"/>
</dbReference>
<dbReference type="GO" id="GO:0005525">
    <property type="term" value="F:GTP binding"/>
    <property type="evidence" value="ECO:0007669"/>
    <property type="project" value="UniProtKB-UniRule"/>
</dbReference>
<dbReference type="GO" id="GO:0003924">
    <property type="term" value="F:GTPase activity"/>
    <property type="evidence" value="ECO:0007669"/>
    <property type="project" value="InterPro"/>
</dbReference>
<dbReference type="GO" id="GO:0003746">
    <property type="term" value="F:translation elongation factor activity"/>
    <property type="evidence" value="ECO:0007669"/>
    <property type="project" value="UniProtKB-UniRule"/>
</dbReference>
<dbReference type="GO" id="GO:0070125">
    <property type="term" value="P:mitochondrial translational elongation"/>
    <property type="evidence" value="ECO:0007669"/>
    <property type="project" value="TreeGrafter"/>
</dbReference>
<dbReference type="CDD" id="cd01884">
    <property type="entry name" value="EF_Tu"/>
    <property type="match status" value="1"/>
</dbReference>
<dbReference type="CDD" id="cd03697">
    <property type="entry name" value="EFTU_II"/>
    <property type="match status" value="1"/>
</dbReference>
<dbReference type="CDD" id="cd03707">
    <property type="entry name" value="EFTU_III"/>
    <property type="match status" value="1"/>
</dbReference>
<dbReference type="FunFam" id="2.40.30.10:FF:000001">
    <property type="entry name" value="Elongation factor Tu"/>
    <property type="match status" value="1"/>
</dbReference>
<dbReference type="FunFam" id="3.40.50.300:FF:000003">
    <property type="entry name" value="Elongation factor Tu"/>
    <property type="match status" value="1"/>
</dbReference>
<dbReference type="Gene3D" id="3.40.50.300">
    <property type="entry name" value="P-loop containing nucleotide triphosphate hydrolases"/>
    <property type="match status" value="1"/>
</dbReference>
<dbReference type="Gene3D" id="2.40.30.10">
    <property type="entry name" value="Translation factors"/>
    <property type="match status" value="2"/>
</dbReference>
<dbReference type="HAMAP" id="MF_00118_B">
    <property type="entry name" value="EF_Tu_B"/>
    <property type="match status" value="1"/>
</dbReference>
<dbReference type="InterPro" id="IPR041709">
    <property type="entry name" value="EF-Tu_GTP-bd"/>
</dbReference>
<dbReference type="InterPro" id="IPR050055">
    <property type="entry name" value="EF-Tu_GTPase"/>
</dbReference>
<dbReference type="InterPro" id="IPR004161">
    <property type="entry name" value="EFTu-like_2"/>
</dbReference>
<dbReference type="InterPro" id="IPR033720">
    <property type="entry name" value="EFTU_2"/>
</dbReference>
<dbReference type="InterPro" id="IPR031157">
    <property type="entry name" value="G_TR_CS"/>
</dbReference>
<dbReference type="InterPro" id="IPR027417">
    <property type="entry name" value="P-loop_NTPase"/>
</dbReference>
<dbReference type="InterPro" id="IPR005225">
    <property type="entry name" value="Small_GTP-bd"/>
</dbReference>
<dbReference type="InterPro" id="IPR000795">
    <property type="entry name" value="T_Tr_GTP-bd_dom"/>
</dbReference>
<dbReference type="InterPro" id="IPR009000">
    <property type="entry name" value="Transl_B-barrel_sf"/>
</dbReference>
<dbReference type="InterPro" id="IPR009001">
    <property type="entry name" value="Transl_elong_EF1A/Init_IF2_C"/>
</dbReference>
<dbReference type="InterPro" id="IPR004541">
    <property type="entry name" value="Transl_elong_EFTu/EF1A_bac/org"/>
</dbReference>
<dbReference type="InterPro" id="IPR004160">
    <property type="entry name" value="Transl_elong_EFTu/EF1A_C"/>
</dbReference>
<dbReference type="NCBIfam" id="TIGR00485">
    <property type="entry name" value="EF-Tu"/>
    <property type="match status" value="1"/>
</dbReference>
<dbReference type="NCBIfam" id="NF000766">
    <property type="entry name" value="PRK00049.1"/>
    <property type="match status" value="1"/>
</dbReference>
<dbReference type="NCBIfam" id="NF009372">
    <property type="entry name" value="PRK12735.1"/>
    <property type="match status" value="1"/>
</dbReference>
<dbReference type="NCBIfam" id="NF009373">
    <property type="entry name" value="PRK12736.1"/>
    <property type="match status" value="1"/>
</dbReference>
<dbReference type="NCBIfam" id="TIGR00231">
    <property type="entry name" value="small_GTP"/>
    <property type="match status" value="1"/>
</dbReference>
<dbReference type="PANTHER" id="PTHR43721:SF5">
    <property type="entry name" value="ELONGATION FACTOR TU, CHLOROPLASTIC"/>
    <property type="match status" value="1"/>
</dbReference>
<dbReference type="PANTHER" id="PTHR43721">
    <property type="entry name" value="ELONGATION FACTOR TU-RELATED"/>
    <property type="match status" value="1"/>
</dbReference>
<dbReference type="Pfam" id="PF00009">
    <property type="entry name" value="GTP_EFTU"/>
    <property type="match status" value="1"/>
</dbReference>
<dbReference type="Pfam" id="PF03144">
    <property type="entry name" value="GTP_EFTU_D2"/>
    <property type="match status" value="1"/>
</dbReference>
<dbReference type="Pfam" id="PF03143">
    <property type="entry name" value="GTP_EFTU_D3"/>
    <property type="match status" value="1"/>
</dbReference>
<dbReference type="PRINTS" id="PR00315">
    <property type="entry name" value="ELONGATNFCT"/>
</dbReference>
<dbReference type="SUPFAM" id="SSF50465">
    <property type="entry name" value="EF-Tu/eEF-1alpha/eIF2-gamma C-terminal domain"/>
    <property type="match status" value="1"/>
</dbReference>
<dbReference type="SUPFAM" id="SSF52540">
    <property type="entry name" value="P-loop containing nucleoside triphosphate hydrolases"/>
    <property type="match status" value="1"/>
</dbReference>
<dbReference type="SUPFAM" id="SSF50447">
    <property type="entry name" value="Translation proteins"/>
    <property type="match status" value="1"/>
</dbReference>
<dbReference type="PROSITE" id="PS00301">
    <property type="entry name" value="G_TR_1"/>
    <property type="match status" value="1"/>
</dbReference>
<dbReference type="PROSITE" id="PS51722">
    <property type="entry name" value="G_TR_2"/>
    <property type="match status" value="1"/>
</dbReference>
<proteinExistence type="inferred from homology"/>
<organism>
    <name type="scientific">Codium fragile</name>
    <name type="common">Dead man's fingers</name>
    <name type="synonym">Green alga</name>
    <dbReference type="NCBI Taxonomy" id="3133"/>
    <lineage>
        <taxon>Eukaryota</taxon>
        <taxon>Viridiplantae</taxon>
        <taxon>Chlorophyta</taxon>
        <taxon>Ulvophyceae</taxon>
        <taxon>TCBD clade</taxon>
        <taxon>Bryopsidales</taxon>
        <taxon>Bryopsidineae</taxon>
        <taxon>Codiaceae</taxon>
        <taxon>Codium</taxon>
    </lineage>
</organism>
<evidence type="ECO:0000250" key="1"/>
<evidence type="ECO:0000255" key="2">
    <source>
        <dbReference type="HAMAP-Rule" id="MF_00118"/>
    </source>
</evidence>
<evidence type="ECO:0000305" key="3"/>
<keyword id="KW-0150">Chloroplast</keyword>
<keyword id="KW-0251">Elongation factor</keyword>
<keyword id="KW-0342">GTP-binding</keyword>
<keyword id="KW-0378">Hydrolase</keyword>
<keyword id="KW-0460">Magnesium</keyword>
<keyword id="KW-0479">Metal-binding</keyword>
<keyword id="KW-0547">Nucleotide-binding</keyword>
<keyword id="KW-0934">Plastid</keyword>
<keyword id="KW-0648">Protein biosynthesis</keyword>